<gene>
    <name type="primary">MAL61</name>
    <name type="synonym">MAL6T</name>
</gene>
<protein>
    <recommendedName>
        <fullName>Maltose permease MAL61</fullName>
    </recommendedName>
    <alternativeName>
        <fullName>Maltose transport protein MAL61</fullName>
    </alternativeName>
</protein>
<proteinExistence type="inferred from homology"/>
<keyword id="KW-0462">Maltose metabolism</keyword>
<keyword id="KW-0472">Membrane</keyword>
<keyword id="KW-0762">Sugar transport</keyword>
<keyword id="KW-0812">Transmembrane</keyword>
<keyword id="KW-1133">Transmembrane helix</keyword>
<keyword id="KW-0813">Transport</keyword>
<accession>P15685</accession>
<reference key="1">
    <citation type="journal article" date="1989" name="Gene">
        <title>Primary structure of the maltose-permease-encoding gene of Saccharomyces carlsbergensis.</title>
        <authorList>
            <person name="Yao B."/>
            <person name="Sollitti P."/>
            <person name="Marmur J."/>
        </authorList>
    </citation>
    <scope>NUCLEOTIDE SEQUENCE [GENOMIC DNA]</scope>
    <source>
        <strain>Carlsbergensis / JM1901</strain>
    </source>
</reference>
<reference key="2">
    <citation type="journal article" date="1989" name="Genetics">
        <title>The maltose permease encoded by the MAL61 gene of Saccharomyces cerevisiae exhibits both sequence and structural homology to other sugar transporters.</title>
        <authorList>
            <person name="Cheng Q."/>
            <person name="Michels C.A."/>
        </authorList>
    </citation>
    <scope>NUCLEOTIDE SEQUENCE [GENOMIC DNA]</scope>
</reference>
<reference key="3">
    <citation type="journal article" date="1986" name="Gene">
        <title>Primary structure of the maltase gene of the MAL6 locus of Saccharomyces carlsbergensis.</title>
        <authorList>
            <person name="Hong S.H."/>
            <person name="Marmur J."/>
        </authorList>
    </citation>
    <scope>NUCLEOTIDE SEQUENCE [GENOMIC DNA] OF 1-31</scope>
    <source>
        <strain>Carlsbergensis / CB11</strain>
    </source>
</reference>
<feature type="chain" id="PRO_0000050423" description="Maltose permease MAL61">
    <location>
        <begin position="1"/>
        <end position="614"/>
    </location>
</feature>
<feature type="topological domain" description="Cytoplasmic" evidence="1">
    <location>
        <begin position="1"/>
        <end position="108"/>
    </location>
</feature>
<feature type="transmembrane region" description="Helical; Name=1" evidence="1">
    <location>
        <begin position="109"/>
        <end position="129"/>
    </location>
</feature>
<feature type="topological domain" description="Extracellular" evidence="1">
    <location>
        <begin position="130"/>
        <end position="144"/>
    </location>
</feature>
<feature type="transmembrane region" description="Helical; Name=2" evidence="1">
    <location>
        <begin position="145"/>
        <end position="165"/>
    </location>
</feature>
<feature type="topological domain" description="Cytoplasmic" evidence="1">
    <location>
        <begin position="166"/>
        <end position="180"/>
    </location>
</feature>
<feature type="transmembrane region" description="Helical; Name=3" evidence="1">
    <location>
        <begin position="181"/>
        <end position="201"/>
    </location>
</feature>
<feature type="topological domain" description="Extracellular" evidence="1">
    <location>
        <position position="202"/>
    </location>
</feature>
<feature type="transmembrane region" description="Helical; Name=4" evidence="1">
    <location>
        <begin position="203"/>
        <end position="223"/>
    </location>
</feature>
<feature type="topological domain" description="Cytoplasmic" evidence="1">
    <location>
        <begin position="224"/>
        <end position="236"/>
    </location>
</feature>
<feature type="transmembrane region" description="Helical; Name=5" evidence="1">
    <location>
        <begin position="237"/>
        <end position="257"/>
    </location>
</feature>
<feature type="topological domain" description="Extracellular" evidence="1">
    <location>
        <begin position="258"/>
        <end position="272"/>
    </location>
</feature>
<feature type="transmembrane region" description="Helical; Name=6" evidence="1">
    <location>
        <begin position="273"/>
        <end position="293"/>
    </location>
</feature>
<feature type="topological domain" description="Cytoplasmic" evidence="1">
    <location>
        <begin position="294"/>
        <end position="364"/>
    </location>
</feature>
<feature type="transmembrane region" description="Helical; Name=7" evidence="1">
    <location>
        <begin position="365"/>
        <end position="385"/>
    </location>
</feature>
<feature type="topological domain" description="Extracellular" evidence="1">
    <location>
        <begin position="386"/>
        <end position="398"/>
    </location>
</feature>
<feature type="transmembrane region" description="Helical; Name=8" evidence="1">
    <location>
        <begin position="399"/>
        <end position="419"/>
    </location>
</feature>
<feature type="topological domain" description="Cytoplasmic" evidence="1">
    <location>
        <begin position="420"/>
        <end position="427"/>
    </location>
</feature>
<feature type="transmembrane region" description="Helical; Name=9" evidence="1">
    <location>
        <begin position="428"/>
        <end position="448"/>
    </location>
</feature>
<feature type="topological domain" description="Extracellular" evidence="1">
    <location>
        <begin position="449"/>
        <end position="460"/>
    </location>
</feature>
<feature type="transmembrane region" description="Helical; Name=10" evidence="1">
    <location>
        <begin position="461"/>
        <end position="481"/>
    </location>
</feature>
<feature type="topological domain" description="Cytoplasmic" evidence="1">
    <location>
        <begin position="482"/>
        <end position="493"/>
    </location>
</feature>
<feature type="transmembrane region" description="Helical; Name=11" evidence="1">
    <location>
        <begin position="494"/>
        <end position="514"/>
    </location>
</feature>
<feature type="topological domain" description="Extracellular" evidence="1">
    <location>
        <begin position="515"/>
        <end position="526"/>
    </location>
</feature>
<feature type="transmembrane region" description="Helical; Name=12" evidence="1">
    <location>
        <begin position="527"/>
        <end position="547"/>
    </location>
</feature>
<feature type="topological domain" description="Cytoplasmic" evidence="1">
    <location>
        <begin position="548"/>
        <end position="614"/>
    </location>
</feature>
<feature type="region of interest" description="Disordered" evidence="2">
    <location>
        <begin position="1"/>
        <end position="48"/>
    </location>
</feature>
<feature type="region of interest" description="Disordered" evidence="2">
    <location>
        <begin position="594"/>
        <end position="614"/>
    </location>
</feature>
<feature type="compositionally biased region" description="Basic and acidic residues" evidence="2">
    <location>
        <begin position="38"/>
        <end position="48"/>
    </location>
</feature>
<organism>
    <name type="scientific">Saccharomyces cerevisiae</name>
    <name type="common">Baker's yeast</name>
    <dbReference type="NCBI Taxonomy" id="4932"/>
    <lineage>
        <taxon>Eukaryota</taxon>
        <taxon>Fungi</taxon>
        <taxon>Dikarya</taxon>
        <taxon>Ascomycota</taxon>
        <taxon>Saccharomycotina</taxon>
        <taxon>Saccharomycetes</taxon>
        <taxon>Saccharomycetales</taxon>
        <taxon>Saccharomycetaceae</taxon>
        <taxon>Saccharomyces</taxon>
    </lineage>
</organism>
<comment type="function">
    <text>Transporter for maltose.</text>
</comment>
<comment type="subcellular location">
    <subcellularLocation>
        <location>Membrane</location>
        <topology>Multi-pass membrane protein</topology>
    </subcellularLocation>
</comment>
<comment type="similarity">
    <text evidence="3">Belongs to the major facilitator superfamily. Sugar transporter (TC 2.A.1.1) family.</text>
</comment>
<sequence>MKGLSSLINRKKDRNDSHLDEIENGVNATEFNSIEMEEQGKKSDFDLSHLEYGPGSLIPNDNNEEVPDLLDEAMQDAKEADESERGMPLMTALKTYPKAAAWSLLVSTTLIQEGYDTAILGAFYALPVFQKKYGSLNSNTGDYEISVSWQIGLCLCYMAGEIVGLQVTGPSVDYMGNRYTLIMALFFLAAFIFILYFCKSLGMIAVGQALCGMPWGCFQCLTVSYASEICPLALRYYLTTYSNLCWTFGQLFAAGIMKNSQNKYANSELGYKLPFALQWIWPLPLAVGIFLAPESPWWLVKKGRIDQARRSLERILSGKGPEKELLVSMELDKIKTTIEKEQKMSDEGTYWDCVKDGINRRRTRIACLCWIGQCSCGASLIGYSTYFYEKAGVSTDTAFTFSIIQYCLGIAATFVSWWASKYCGRFDLYAFGLAFQAIMFFIIGGLGCSDTHGAKMGSGALLMVVAFFYNLGIAPVVFCLVSEMPSSRLRTKTIILARNAYNVIQVVVTVLIMYQLNSEKWNWGAKSGFFWGGFCLATLAWAVVDLPETAGRTFIEINELFRLGVPARKFKSTKVDPFAAAKAAAAEINVKDPKEDLETSVVDEGRSTPSVVNK</sequence>
<name>MAL61_YEASX</name>
<dbReference type="EMBL" id="M27823">
    <property type="protein sequence ID" value="AAA34758.1"/>
    <property type="molecule type" value="Genomic_DNA"/>
</dbReference>
<dbReference type="EMBL" id="X17391">
    <property type="protein sequence ID" value="CAA35254.1"/>
    <property type="molecule type" value="Genomic_DNA"/>
</dbReference>
<dbReference type="EMBL" id="M12601">
    <property type="protein sequence ID" value="AAA34756.2"/>
    <property type="molecule type" value="Genomic_DNA"/>
</dbReference>
<dbReference type="PIR" id="S07686">
    <property type="entry name" value="MMBY61"/>
</dbReference>
<dbReference type="SMR" id="P15685"/>
<dbReference type="TCDB" id="2.A.1.1.10">
    <property type="family name" value="the major facilitator superfamily (mfs)"/>
</dbReference>
<dbReference type="SGD" id="S000029658">
    <property type="gene designation" value="MAL61"/>
</dbReference>
<dbReference type="VEuPathDB" id="FungiDB:YBR298C"/>
<dbReference type="GO" id="GO:0005886">
    <property type="term" value="C:plasma membrane"/>
    <property type="evidence" value="ECO:0000314"/>
    <property type="project" value="SGD"/>
</dbReference>
<dbReference type="GO" id="GO:0005351">
    <property type="term" value="F:carbohydrate:proton symporter activity"/>
    <property type="evidence" value="ECO:0007669"/>
    <property type="project" value="TreeGrafter"/>
</dbReference>
<dbReference type="GO" id="GO:0005363">
    <property type="term" value="F:maltose transmembrane transporter activity"/>
    <property type="evidence" value="ECO:0000316"/>
    <property type="project" value="SGD"/>
</dbReference>
<dbReference type="GO" id="GO:0000023">
    <property type="term" value="P:maltose metabolic process"/>
    <property type="evidence" value="ECO:0007669"/>
    <property type="project" value="UniProtKB-KW"/>
</dbReference>
<dbReference type="GO" id="GO:1904981">
    <property type="term" value="P:maltose transmembrane transport"/>
    <property type="evidence" value="ECO:0000316"/>
    <property type="project" value="SGD"/>
</dbReference>
<dbReference type="FunFam" id="1.20.1250.20:FF:000254">
    <property type="entry name" value="MAL31p Maltose permease"/>
    <property type="match status" value="1"/>
</dbReference>
<dbReference type="Gene3D" id="1.20.1250.20">
    <property type="entry name" value="MFS general substrate transporter like domains"/>
    <property type="match status" value="1"/>
</dbReference>
<dbReference type="InterPro" id="IPR020846">
    <property type="entry name" value="MFS_dom"/>
</dbReference>
<dbReference type="InterPro" id="IPR005828">
    <property type="entry name" value="MFS_sugar_transport-like"/>
</dbReference>
<dbReference type="InterPro" id="IPR050360">
    <property type="entry name" value="MFS_Sugar_Transporters"/>
</dbReference>
<dbReference type="InterPro" id="IPR036259">
    <property type="entry name" value="MFS_trans_sf"/>
</dbReference>
<dbReference type="InterPro" id="IPR003663">
    <property type="entry name" value="Sugar/inositol_transpt"/>
</dbReference>
<dbReference type="InterPro" id="IPR005829">
    <property type="entry name" value="Sugar_transporter_CS"/>
</dbReference>
<dbReference type="NCBIfam" id="TIGR00879">
    <property type="entry name" value="SP"/>
    <property type="match status" value="1"/>
</dbReference>
<dbReference type="PANTHER" id="PTHR48022:SF5">
    <property type="entry name" value="ALPHA-GLUCOSIDES PERMEASE MPH2-RELATED"/>
    <property type="match status" value="1"/>
</dbReference>
<dbReference type="PANTHER" id="PTHR48022">
    <property type="entry name" value="PLASTIDIC GLUCOSE TRANSPORTER 4"/>
    <property type="match status" value="1"/>
</dbReference>
<dbReference type="Pfam" id="PF00083">
    <property type="entry name" value="Sugar_tr"/>
    <property type="match status" value="1"/>
</dbReference>
<dbReference type="SUPFAM" id="SSF103473">
    <property type="entry name" value="MFS general substrate transporter"/>
    <property type="match status" value="1"/>
</dbReference>
<dbReference type="PROSITE" id="PS50850">
    <property type="entry name" value="MFS"/>
    <property type="match status" value="1"/>
</dbReference>
<dbReference type="PROSITE" id="PS00217">
    <property type="entry name" value="SUGAR_TRANSPORT_2"/>
    <property type="match status" value="1"/>
</dbReference>
<evidence type="ECO:0000255" key="1"/>
<evidence type="ECO:0000256" key="2">
    <source>
        <dbReference type="SAM" id="MobiDB-lite"/>
    </source>
</evidence>
<evidence type="ECO:0000305" key="3"/>